<protein>
    <recommendedName>
        <fullName evidence="1">Chaperone protein HtpG</fullName>
    </recommendedName>
    <alternativeName>
        <fullName evidence="1">Heat shock protein HtpG</fullName>
    </alternativeName>
    <alternativeName>
        <fullName evidence="1">High temperature protein G</fullName>
    </alternativeName>
</protein>
<feature type="chain" id="PRO_0000063023" description="Chaperone protein HtpG">
    <location>
        <begin position="1"/>
        <end position="634"/>
    </location>
</feature>
<feature type="region of interest" description="A; substrate-binding" evidence="1">
    <location>
        <begin position="1"/>
        <end position="344"/>
    </location>
</feature>
<feature type="region of interest" description="B" evidence="1">
    <location>
        <begin position="345"/>
        <end position="561"/>
    </location>
</feature>
<feature type="region of interest" description="C" evidence="1">
    <location>
        <begin position="562"/>
        <end position="634"/>
    </location>
</feature>
<dbReference type="EMBL" id="BA000037">
    <property type="protein sequence ID" value="BAC93764.1"/>
    <property type="status" value="ALT_INIT"/>
    <property type="molecule type" value="Genomic_DNA"/>
</dbReference>
<dbReference type="RefSeq" id="WP_043877094.1">
    <property type="nucleotide sequence ID" value="NC_005139.1"/>
</dbReference>
<dbReference type="SMR" id="Q7MMR7"/>
<dbReference type="STRING" id="672.VV93_v1c09250"/>
<dbReference type="KEGG" id="vvy:VV1000"/>
<dbReference type="PATRIC" id="fig|196600.6.peg.998"/>
<dbReference type="eggNOG" id="COG0326">
    <property type="taxonomic scope" value="Bacteria"/>
</dbReference>
<dbReference type="HOGENOM" id="CLU_006684_3_0_6"/>
<dbReference type="Proteomes" id="UP000002675">
    <property type="component" value="Chromosome I"/>
</dbReference>
<dbReference type="GO" id="GO:0005737">
    <property type="term" value="C:cytoplasm"/>
    <property type="evidence" value="ECO:0007669"/>
    <property type="project" value="UniProtKB-SubCell"/>
</dbReference>
<dbReference type="GO" id="GO:0005524">
    <property type="term" value="F:ATP binding"/>
    <property type="evidence" value="ECO:0007669"/>
    <property type="project" value="UniProtKB-UniRule"/>
</dbReference>
<dbReference type="GO" id="GO:0016887">
    <property type="term" value="F:ATP hydrolysis activity"/>
    <property type="evidence" value="ECO:0007669"/>
    <property type="project" value="InterPro"/>
</dbReference>
<dbReference type="GO" id="GO:0140662">
    <property type="term" value="F:ATP-dependent protein folding chaperone"/>
    <property type="evidence" value="ECO:0007669"/>
    <property type="project" value="InterPro"/>
</dbReference>
<dbReference type="GO" id="GO:0051082">
    <property type="term" value="F:unfolded protein binding"/>
    <property type="evidence" value="ECO:0007669"/>
    <property type="project" value="UniProtKB-UniRule"/>
</dbReference>
<dbReference type="CDD" id="cd16927">
    <property type="entry name" value="HATPase_Hsp90-like"/>
    <property type="match status" value="1"/>
</dbReference>
<dbReference type="FunFam" id="1.20.120.790:FF:000002">
    <property type="entry name" value="Molecular chaperone HtpG"/>
    <property type="match status" value="1"/>
</dbReference>
<dbReference type="FunFam" id="3.30.230.80:FF:000002">
    <property type="entry name" value="Molecular chaperone HtpG"/>
    <property type="match status" value="1"/>
</dbReference>
<dbReference type="FunFam" id="3.30.565.10:FF:000009">
    <property type="entry name" value="Molecular chaperone HtpG"/>
    <property type="match status" value="1"/>
</dbReference>
<dbReference type="FunFam" id="3.40.50.11260:FF:000002">
    <property type="entry name" value="Molecular chaperone HtpG"/>
    <property type="match status" value="1"/>
</dbReference>
<dbReference type="Gene3D" id="3.30.230.80">
    <property type="match status" value="1"/>
</dbReference>
<dbReference type="Gene3D" id="3.40.50.11260">
    <property type="match status" value="1"/>
</dbReference>
<dbReference type="Gene3D" id="1.20.120.790">
    <property type="entry name" value="Heat shock protein 90, C-terminal domain"/>
    <property type="match status" value="1"/>
</dbReference>
<dbReference type="Gene3D" id="3.30.565.10">
    <property type="entry name" value="Histidine kinase-like ATPase, C-terminal domain"/>
    <property type="match status" value="1"/>
</dbReference>
<dbReference type="HAMAP" id="MF_00505">
    <property type="entry name" value="HSP90"/>
    <property type="match status" value="1"/>
</dbReference>
<dbReference type="InterPro" id="IPR036890">
    <property type="entry name" value="HATPase_C_sf"/>
</dbReference>
<dbReference type="InterPro" id="IPR019805">
    <property type="entry name" value="Heat_shock_protein_90_CS"/>
</dbReference>
<dbReference type="InterPro" id="IPR037196">
    <property type="entry name" value="HSP90_C"/>
</dbReference>
<dbReference type="InterPro" id="IPR001404">
    <property type="entry name" value="Hsp90_fam"/>
</dbReference>
<dbReference type="InterPro" id="IPR020575">
    <property type="entry name" value="Hsp90_N"/>
</dbReference>
<dbReference type="InterPro" id="IPR020568">
    <property type="entry name" value="Ribosomal_Su5_D2-typ_SF"/>
</dbReference>
<dbReference type="NCBIfam" id="NF003555">
    <property type="entry name" value="PRK05218.1"/>
    <property type="match status" value="1"/>
</dbReference>
<dbReference type="PANTHER" id="PTHR11528">
    <property type="entry name" value="HEAT SHOCK PROTEIN 90 FAMILY MEMBER"/>
    <property type="match status" value="1"/>
</dbReference>
<dbReference type="Pfam" id="PF13589">
    <property type="entry name" value="HATPase_c_3"/>
    <property type="match status" value="1"/>
</dbReference>
<dbReference type="Pfam" id="PF00183">
    <property type="entry name" value="HSP90"/>
    <property type="match status" value="1"/>
</dbReference>
<dbReference type="PIRSF" id="PIRSF002583">
    <property type="entry name" value="Hsp90"/>
    <property type="match status" value="1"/>
</dbReference>
<dbReference type="PRINTS" id="PR00775">
    <property type="entry name" value="HEATSHOCK90"/>
</dbReference>
<dbReference type="SMART" id="SM00387">
    <property type="entry name" value="HATPase_c"/>
    <property type="match status" value="1"/>
</dbReference>
<dbReference type="SUPFAM" id="SSF55874">
    <property type="entry name" value="ATPase domain of HSP90 chaperone/DNA topoisomerase II/histidine kinase"/>
    <property type="match status" value="1"/>
</dbReference>
<dbReference type="SUPFAM" id="SSF110942">
    <property type="entry name" value="HSP90 C-terminal domain"/>
    <property type="match status" value="1"/>
</dbReference>
<dbReference type="SUPFAM" id="SSF54211">
    <property type="entry name" value="Ribosomal protein S5 domain 2-like"/>
    <property type="match status" value="1"/>
</dbReference>
<dbReference type="PROSITE" id="PS00298">
    <property type="entry name" value="HSP90"/>
    <property type="match status" value="1"/>
</dbReference>
<accession>Q7MMR7</accession>
<sequence>MNETVANNKETRGFQSEVKQLLHLMIHSLYSNKEIFLRELISNASDAADKLRFQALSNPALYENDAELGVKLSFNEEHNTLTISDNGIGMSREEVISHLGTIAKSGTAEFFSKLSQEQSKDSQLIGQFGVGFYSAFIVADAVTVRTRAAGLNADQAVLWHSAGEGEYTVEDITKESRGTDIILHMREDGKEFLNEWRLRDVIGKYSDHIGIPVSIQTRVRDEEGKETEEVKWEQINKAQALWTRNKSDISDEEYQEFYKHVSHDFADPLLWSHNRVEGKNDYTSLLYIPSKAPWDMMNRDHKSGLKLYVQRVFIMDDAEQFMPSYLRFVRGLIDSNDLPLNVSREILQDNKVTQSLRGACTKRVLTMLERLAKNDTEKYQTFWKEFGLVMKEGPAEDYANREKVAALLRFASTEVDSAEQTVSLESYVERMKEGQDKIYYLTADSYAAAKNSPHLEQFKAKGLEVILMFDRIDEWLMNYLTEFDGKQFQSITKAGLDLSQFEDEQEKEKQKETEQEFQSVVERTKSYLGDRVKEVRTTFKLANTPAVVVTDDFEMGTQMAKLLAAAGQAVPEVKYIFEINPNHTLVKQMADEADEEAFGRWVEVLLGQAMLAERGSMEDPSQFLTAINSLLTKG</sequence>
<gene>
    <name evidence="1" type="primary">htpG</name>
    <name type="ordered locus">VV1000</name>
</gene>
<name>HTPG_VIBVY</name>
<organism>
    <name type="scientific">Vibrio vulnificus (strain YJ016)</name>
    <dbReference type="NCBI Taxonomy" id="196600"/>
    <lineage>
        <taxon>Bacteria</taxon>
        <taxon>Pseudomonadati</taxon>
        <taxon>Pseudomonadota</taxon>
        <taxon>Gammaproteobacteria</taxon>
        <taxon>Vibrionales</taxon>
        <taxon>Vibrionaceae</taxon>
        <taxon>Vibrio</taxon>
    </lineage>
</organism>
<comment type="function">
    <text evidence="1">Molecular chaperone. Has ATPase activity.</text>
</comment>
<comment type="subunit">
    <text evidence="1">Homodimer.</text>
</comment>
<comment type="subcellular location">
    <subcellularLocation>
        <location evidence="1">Cytoplasm</location>
    </subcellularLocation>
</comment>
<comment type="similarity">
    <text evidence="1">Belongs to the heat shock protein 90 family.</text>
</comment>
<comment type="sequence caution" evidence="2">
    <conflict type="erroneous initiation">
        <sequence resource="EMBL-CDS" id="BAC93764"/>
    </conflict>
</comment>
<proteinExistence type="inferred from homology"/>
<evidence type="ECO:0000255" key="1">
    <source>
        <dbReference type="HAMAP-Rule" id="MF_00505"/>
    </source>
</evidence>
<evidence type="ECO:0000305" key="2"/>
<reference key="1">
    <citation type="journal article" date="2003" name="Genome Res.">
        <title>Comparative genome analysis of Vibrio vulnificus, a marine pathogen.</title>
        <authorList>
            <person name="Chen C.-Y."/>
            <person name="Wu K.-M."/>
            <person name="Chang Y.-C."/>
            <person name="Chang C.-H."/>
            <person name="Tsai H.-C."/>
            <person name="Liao T.-L."/>
            <person name="Liu Y.-M."/>
            <person name="Chen H.-J."/>
            <person name="Shen A.B.-T."/>
            <person name="Li J.-C."/>
            <person name="Su T.-L."/>
            <person name="Shao C.-P."/>
            <person name="Lee C.-T."/>
            <person name="Hor L.-I."/>
            <person name="Tsai S.-F."/>
        </authorList>
    </citation>
    <scope>NUCLEOTIDE SEQUENCE [LARGE SCALE GENOMIC DNA]</scope>
    <source>
        <strain>YJ016</strain>
    </source>
</reference>
<keyword id="KW-0067">ATP-binding</keyword>
<keyword id="KW-0143">Chaperone</keyword>
<keyword id="KW-0963">Cytoplasm</keyword>
<keyword id="KW-0547">Nucleotide-binding</keyword>
<keyword id="KW-0346">Stress response</keyword>